<organism>
    <name type="scientific">Mus musculus</name>
    <name type="common">Mouse</name>
    <dbReference type="NCBI Taxonomy" id="10090"/>
    <lineage>
        <taxon>Eukaryota</taxon>
        <taxon>Metazoa</taxon>
        <taxon>Chordata</taxon>
        <taxon>Craniata</taxon>
        <taxon>Vertebrata</taxon>
        <taxon>Euteleostomi</taxon>
        <taxon>Mammalia</taxon>
        <taxon>Eutheria</taxon>
        <taxon>Euarchontoglires</taxon>
        <taxon>Glires</taxon>
        <taxon>Rodentia</taxon>
        <taxon>Myomorpha</taxon>
        <taxon>Muroidea</taxon>
        <taxon>Muridae</taxon>
        <taxon>Murinae</taxon>
        <taxon>Mus</taxon>
        <taxon>Mus</taxon>
    </lineage>
</organism>
<name>K1143_MOUSE</name>
<keyword id="KW-0007">Acetylation</keyword>
<keyword id="KW-0597">Phosphoprotein</keyword>
<keyword id="KW-1185">Reference proteome</keyword>
<protein>
    <recommendedName>
        <fullName>Uncharacterized protein KIAA1143 homolog</fullName>
    </recommendedName>
</protein>
<reference key="1">
    <citation type="journal article" date="2005" name="Science">
        <title>The transcriptional landscape of the mammalian genome.</title>
        <authorList>
            <person name="Carninci P."/>
            <person name="Kasukawa T."/>
            <person name="Katayama S."/>
            <person name="Gough J."/>
            <person name="Frith M.C."/>
            <person name="Maeda N."/>
            <person name="Oyama R."/>
            <person name="Ravasi T."/>
            <person name="Lenhard B."/>
            <person name="Wells C."/>
            <person name="Kodzius R."/>
            <person name="Shimokawa K."/>
            <person name="Bajic V.B."/>
            <person name="Brenner S.E."/>
            <person name="Batalov S."/>
            <person name="Forrest A.R."/>
            <person name="Zavolan M."/>
            <person name="Davis M.J."/>
            <person name="Wilming L.G."/>
            <person name="Aidinis V."/>
            <person name="Allen J.E."/>
            <person name="Ambesi-Impiombato A."/>
            <person name="Apweiler R."/>
            <person name="Aturaliya R.N."/>
            <person name="Bailey T.L."/>
            <person name="Bansal M."/>
            <person name="Baxter L."/>
            <person name="Beisel K.W."/>
            <person name="Bersano T."/>
            <person name="Bono H."/>
            <person name="Chalk A.M."/>
            <person name="Chiu K.P."/>
            <person name="Choudhary V."/>
            <person name="Christoffels A."/>
            <person name="Clutterbuck D.R."/>
            <person name="Crowe M.L."/>
            <person name="Dalla E."/>
            <person name="Dalrymple B.P."/>
            <person name="de Bono B."/>
            <person name="Della Gatta G."/>
            <person name="di Bernardo D."/>
            <person name="Down T."/>
            <person name="Engstrom P."/>
            <person name="Fagiolini M."/>
            <person name="Faulkner G."/>
            <person name="Fletcher C.F."/>
            <person name="Fukushima T."/>
            <person name="Furuno M."/>
            <person name="Futaki S."/>
            <person name="Gariboldi M."/>
            <person name="Georgii-Hemming P."/>
            <person name="Gingeras T.R."/>
            <person name="Gojobori T."/>
            <person name="Green R.E."/>
            <person name="Gustincich S."/>
            <person name="Harbers M."/>
            <person name="Hayashi Y."/>
            <person name="Hensch T.K."/>
            <person name="Hirokawa N."/>
            <person name="Hill D."/>
            <person name="Huminiecki L."/>
            <person name="Iacono M."/>
            <person name="Ikeo K."/>
            <person name="Iwama A."/>
            <person name="Ishikawa T."/>
            <person name="Jakt M."/>
            <person name="Kanapin A."/>
            <person name="Katoh M."/>
            <person name="Kawasawa Y."/>
            <person name="Kelso J."/>
            <person name="Kitamura H."/>
            <person name="Kitano H."/>
            <person name="Kollias G."/>
            <person name="Krishnan S.P."/>
            <person name="Kruger A."/>
            <person name="Kummerfeld S.K."/>
            <person name="Kurochkin I.V."/>
            <person name="Lareau L.F."/>
            <person name="Lazarevic D."/>
            <person name="Lipovich L."/>
            <person name="Liu J."/>
            <person name="Liuni S."/>
            <person name="McWilliam S."/>
            <person name="Madan Babu M."/>
            <person name="Madera M."/>
            <person name="Marchionni L."/>
            <person name="Matsuda H."/>
            <person name="Matsuzawa S."/>
            <person name="Miki H."/>
            <person name="Mignone F."/>
            <person name="Miyake S."/>
            <person name="Morris K."/>
            <person name="Mottagui-Tabar S."/>
            <person name="Mulder N."/>
            <person name="Nakano N."/>
            <person name="Nakauchi H."/>
            <person name="Ng P."/>
            <person name="Nilsson R."/>
            <person name="Nishiguchi S."/>
            <person name="Nishikawa S."/>
            <person name="Nori F."/>
            <person name="Ohara O."/>
            <person name="Okazaki Y."/>
            <person name="Orlando V."/>
            <person name="Pang K.C."/>
            <person name="Pavan W.J."/>
            <person name="Pavesi G."/>
            <person name="Pesole G."/>
            <person name="Petrovsky N."/>
            <person name="Piazza S."/>
            <person name="Reed J."/>
            <person name="Reid J.F."/>
            <person name="Ring B.Z."/>
            <person name="Ringwald M."/>
            <person name="Rost B."/>
            <person name="Ruan Y."/>
            <person name="Salzberg S.L."/>
            <person name="Sandelin A."/>
            <person name="Schneider C."/>
            <person name="Schoenbach C."/>
            <person name="Sekiguchi K."/>
            <person name="Semple C.A."/>
            <person name="Seno S."/>
            <person name="Sessa L."/>
            <person name="Sheng Y."/>
            <person name="Shibata Y."/>
            <person name="Shimada H."/>
            <person name="Shimada K."/>
            <person name="Silva D."/>
            <person name="Sinclair B."/>
            <person name="Sperling S."/>
            <person name="Stupka E."/>
            <person name="Sugiura K."/>
            <person name="Sultana R."/>
            <person name="Takenaka Y."/>
            <person name="Taki K."/>
            <person name="Tammoja K."/>
            <person name="Tan S.L."/>
            <person name="Tang S."/>
            <person name="Taylor M.S."/>
            <person name="Tegner J."/>
            <person name="Teichmann S.A."/>
            <person name="Ueda H.R."/>
            <person name="van Nimwegen E."/>
            <person name="Verardo R."/>
            <person name="Wei C.L."/>
            <person name="Yagi K."/>
            <person name="Yamanishi H."/>
            <person name="Zabarovsky E."/>
            <person name="Zhu S."/>
            <person name="Zimmer A."/>
            <person name="Hide W."/>
            <person name="Bult C."/>
            <person name="Grimmond S.M."/>
            <person name="Teasdale R.D."/>
            <person name="Liu E.T."/>
            <person name="Brusic V."/>
            <person name="Quackenbush J."/>
            <person name="Wahlestedt C."/>
            <person name="Mattick J.S."/>
            <person name="Hume D.A."/>
            <person name="Kai C."/>
            <person name="Sasaki D."/>
            <person name="Tomaru Y."/>
            <person name="Fukuda S."/>
            <person name="Kanamori-Katayama M."/>
            <person name="Suzuki M."/>
            <person name="Aoki J."/>
            <person name="Arakawa T."/>
            <person name="Iida J."/>
            <person name="Imamura K."/>
            <person name="Itoh M."/>
            <person name="Kato T."/>
            <person name="Kawaji H."/>
            <person name="Kawagashira N."/>
            <person name="Kawashima T."/>
            <person name="Kojima M."/>
            <person name="Kondo S."/>
            <person name="Konno H."/>
            <person name="Nakano K."/>
            <person name="Ninomiya N."/>
            <person name="Nishio T."/>
            <person name="Okada M."/>
            <person name="Plessy C."/>
            <person name="Shibata K."/>
            <person name="Shiraki T."/>
            <person name="Suzuki S."/>
            <person name="Tagami M."/>
            <person name="Waki K."/>
            <person name="Watahiki A."/>
            <person name="Okamura-Oho Y."/>
            <person name="Suzuki H."/>
            <person name="Kawai J."/>
            <person name="Hayashizaki Y."/>
        </authorList>
    </citation>
    <scope>NUCLEOTIDE SEQUENCE [LARGE SCALE MRNA]</scope>
    <source>
        <strain>C57BL/6J</strain>
        <tissue>Thymus</tissue>
    </source>
</reference>
<reference key="2">
    <citation type="journal article" date="2004" name="Genome Res.">
        <title>The status, quality, and expansion of the NIH full-length cDNA project: the Mammalian Gene Collection (MGC).</title>
        <authorList>
            <consortium name="The MGC Project Team"/>
        </authorList>
    </citation>
    <scope>NUCLEOTIDE SEQUENCE [LARGE SCALE MRNA]</scope>
    <source>
        <strain>FVB/N</strain>
        <tissue>Salivary gland</tissue>
    </source>
</reference>
<reference key="3">
    <citation type="journal article" date="2004" name="Mol. Cell. Proteomics">
        <title>Phosphoproteomic analysis of the developing mouse brain.</title>
        <authorList>
            <person name="Ballif B.A."/>
            <person name="Villen J."/>
            <person name="Beausoleil S.A."/>
            <person name="Schwartz D."/>
            <person name="Gygi S.P."/>
        </authorList>
    </citation>
    <scope>PHOSPHORYLATION [LARGE SCALE ANALYSIS] AT SER-150</scope>
    <scope>IDENTIFICATION BY MASS SPECTROMETRY [LARGE SCALE ANALYSIS]</scope>
    <source>
        <tissue>Embryonic brain</tissue>
    </source>
</reference>
<reference key="4">
    <citation type="journal article" date="2007" name="Proc. Natl. Acad. Sci. U.S.A.">
        <title>Large-scale phosphorylation analysis of mouse liver.</title>
        <authorList>
            <person name="Villen J."/>
            <person name="Beausoleil S.A."/>
            <person name="Gerber S.A."/>
            <person name="Gygi S.P."/>
        </authorList>
    </citation>
    <scope>PHOSPHORYLATION [LARGE SCALE ANALYSIS] AT SER-50</scope>
    <scope>IDENTIFICATION BY MASS SPECTROMETRY [LARGE SCALE ANALYSIS]</scope>
    <source>
        <tissue>Liver</tissue>
    </source>
</reference>
<reference key="5">
    <citation type="journal article" date="2009" name="Immunity">
        <title>The phagosomal proteome in interferon-gamma-activated macrophages.</title>
        <authorList>
            <person name="Trost M."/>
            <person name="English L."/>
            <person name="Lemieux S."/>
            <person name="Courcelles M."/>
            <person name="Desjardins M."/>
            <person name="Thibault P."/>
        </authorList>
    </citation>
    <scope>PHOSPHORYLATION [LARGE SCALE ANALYSIS] AT SER-150</scope>
    <scope>IDENTIFICATION BY MASS SPECTROMETRY [LARGE SCALE ANALYSIS]</scope>
</reference>
<reference key="6">
    <citation type="journal article" date="2010" name="Cell">
        <title>A tissue-specific atlas of mouse protein phosphorylation and expression.</title>
        <authorList>
            <person name="Huttlin E.L."/>
            <person name="Jedrychowski M.P."/>
            <person name="Elias J.E."/>
            <person name="Goswami T."/>
            <person name="Rad R."/>
            <person name="Beausoleil S.A."/>
            <person name="Villen J."/>
            <person name="Haas W."/>
            <person name="Sowa M.E."/>
            <person name="Gygi S.P."/>
        </authorList>
    </citation>
    <scope>PHOSPHORYLATION [LARGE SCALE ANALYSIS] AT SER-50; SER-147 AND SER-150</scope>
    <scope>IDENTIFICATION BY MASS SPECTROMETRY [LARGE SCALE ANALYSIS]</scope>
    <source>
        <tissue>Brain</tissue>
        <tissue>Brown adipose tissue</tissue>
        <tissue>Heart</tissue>
        <tissue>Kidney</tissue>
        <tissue>Liver</tissue>
        <tissue>Lung</tissue>
        <tissue>Spleen</tissue>
        <tissue>Testis</tissue>
    </source>
</reference>
<accession>Q8K039</accession>
<accession>Q9CSR4</accession>
<accession>Q9D0W8</accession>
<sequence length="155" mass="17479">MSKRNQVSYVRPAEPAFLSRFKERVGYKEGPTVETKKIQPQLPDEDGNHSDKEDEQPQVVVLKKGDLTAEEVMKIKAEIKAAKTDEEPPPADGRIVYRKPVKRSSDEKCSGLTASSKKKKTNEDDVNKQSSVRKNSQKQIKNSSLLSFDSEDENE</sequence>
<feature type="chain" id="PRO_0000248339" description="Uncharacterized protein KIAA1143 homolog">
    <location>
        <begin position="1"/>
        <end position="155"/>
    </location>
</feature>
<feature type="region of interest" description="Disordered" evidence="3">
    <location>
        <begin position="24"/>
        <end position="63"/>
    </location>
</feature>
<feature type="region of interest" description="Disordered" evidence="3">
    <location>
        <begin position="80"/>
        <end position="155"/>
    </location>
</feature>
<feature type="compositionally biased region" description="Polar residues" evidence="3">
    <location>
        <begin position="128"/>
        <end position="147"/>
    </location>
</feature>
<feature type="modified residue" description="Phosphoserine" evidence="6 8">
    <location>
        <position position="50"/>
    </location>
</feature>
<feature type="modified residue" description="N6-acetyllysine" evidence="2">
    <location>
        <position position="108"/>
    </location>
</feature>
<feature type="modified residue" description="Phosphoserine" evidence="1">
    <location>
        <position position="130"/>
    </location>
</feature>
<feature type="modified residue" description="Phosphoserine" evidence="8">
    <location>
        <position position="147"/>
    </location>
</feature>
<feature type="modified residue" description="Phosphoserine" evidence="5 7 8">
    <location>
        <position position="150"/>
    </location>
</feature>
<feature type="sequence conflict" description="In Ref. 1; BAB23258." evidence="4" ref="1">
    <original>P</original>
    <variation>A</variation>
    <location>
        <position position="31"/>
    </location>
</feature>
<proteinExistence type="evidence at protein level"/>
<evidence type="ECO:0000250" key="1">
    <source>
        <dbReference type="UniProtKB" id="Q5RKH3"/>
    </source>
</evidence>
<evidence type="ECO:0000250" key="2">
    <source>
        <dbReference type="UniProtKB" id="Q96AT1"/>
    </source>
</evidence>
<evidence type="ECO:0000256" key="3">
    <source>
        <dbReference type="SAM" id="MobiDB-lite"/>
    </source>
</evidence>
<evidence type="ECO:0000305" key="4"/>
<evidence type="ECO:0007744" key="5">
    <source>
    </source>
</evidence>
<evidence type="ECO:0007744" key="6">
    <source>
    </source>
</evidence>
<evidence type="ECO:0007744" key="7">
    <source>
    </source>
</evidence>
<evidence type="ECO:0007744" key="8">
    <source>
    </source>
</evidence>
<dbReference type="EMBL" id="AK004312">
    <property type="protein sequence ID" value="BAB23258.1"/>
    <property type="molecule type" value="mRNA"/>
</dbReference>
<dbReference type="EMBL" id="AK083316">
    <property type="protein sequence ID" value="BAC38862.1"/>
    <property type="molecule type" value="mRNA"/>
</dbReference>
<dbReference type="EMBL" id="AK012115">
    <property type="protein sequence ID" value="BAB28043.1"/>
    <property type="status" value="ALT_TERM"/>
    <property type="molecule type" value="mRNA"/>
</dbReference>
<dbReference type="EMBL" id="AK160617">
    <property type="protein sequence ID" value="BAE35917.1"/>
    <property type="molecule type" value="mRNA"/>
</dbReference>
<dbReference type="EMBL" id="BC034133">
    <property type="protein sequence ID" value="AAH34133.1"/>
    <property type="molecule type" value="mRNA"/>
</dbReference>
<dbReference type="CCDS" id="CCDS23650.1"/>
<dbReference type="RefSeq" id="NP_079695.2">
    <property type="nucleotide sequence ID" value="NM_025419.4"/>
</dbReference>
<dbReference type="SMR" id="Q8K039"/>
<dbReference type="FunCoup" id="Q8K039">
    <property type="interactions" value="395"/>
</dbReference>
<dbReference type="STRING" id="10090.ENSMUSP00000035154"/>
<dbReference type="GlyGen" id="Q8K039">
    <property type="glycosylation" value="1 site"/>
</dbReference>
<dbReference type="iPTMnet" id="Q8K039"/>
<dbReference type="PhosphoSitePlus" id="Q8K039"/>
<dbReference type="jPOST" id="Q8K039"/>
<dbReference type="PaxDb" id="10090-ENSMUSP00000035154"/>
<dbReference type="PeptideAtlas" id="Q8K039"/>
<dbReference type="Pumba" id="Q8K039"/>
<dbReference type="Antibodypedia" id="48785">
    <property type="antibodies" value="56 antibodies from 14 providers"/>
</dbReference>
<dbReference type="Ensembl" id="ENSMUST00000035154.4">
    <property type="protein sequence ID" value="ENSMUSP00000035154.4"/>
    <property type="gene ID" value="ENSMUSG00000032551.8"/>
</dbReference>
<dbReference type="GeneID" id="66202"/>
<dbReference type="KEGG" id="mmu:66202"/>
<dbReference type="UCSC" id="uc009sfj.2">
    <property type="organism name" value="mouse"/>
</dbReference>
<dbReference type="AGR" id="MGI:1913452"/>
<dbReference type="MGI" id="MGI:1913452">
    <property type="gene designation" value="1110059G10Rik"/>
</dbReference>
<dbReference type="VEuPathDB" id="HostDB:ENSMUSG00000032551"/>
<dbReference type="eggNOG" id="ENOG502S2KJ">
    <property type="taxonomic scope" value="Eukaryota"/>
</dbReference>
<dbReference type="GeneTree" id="ENSGT00390000001296"/>
<dbReference type="HOGENOM" id="CLU_111288_0_1_1"/>
<dbReference type="InParanoid" id="Q8K039"/>
<dbReference type="OMA" id="KRQVGYR"/>
<dbReference type="OrthoDB" id="10043580at2759"/>
<dbReference type="PhylomeDB" id="Q8K039"/>
<dbReference type="TreeFam" id="TF313955"/>
<dbReference type="BioGRID-ORCS" id="66202">
    <property type="hits" value="1 hit in 78 CRISPR screens"/>
</dbReference>
<dbReference type="PRO" id="PR:Q8K039"/>
<dbReference type="Proteomes" id="UP000000589">
    <property type="component" value="Chromosome 9"/>
</dbReference>
<dbReference type="RNAct" id="Q8K039">
    <property type="molecule type" value="protein"/>
</dbReference>
<dbReference type="Bgee" id="ENSMUSG00000032551">
    <property type="expression patterns" value="Expressed in medial ganglionic eminence and 256 other cell types or tissues"/>
</dbReference>
<dbReference type="ExpressionAtlas" id="Q8K039">
    <property type="expression patterns" value="baseline and differential"/>
</dbReference>
<dbReference type="InterPro" id="IPR027911">
    <property type="entry name" value="DUF4604"/>
</dbReference>
<dbReference type="InterPro" id="IPR040219">
    <property type="entry name" value="KIAA1143-like"/>
</dbReference>
<dbReference type="PANTHER" id="PTHR31195">
    <property type="entry name" value="GEO02494P1"/>
    <property type="match status" value="1"/>
</dbReference>
<dbReference type="PANTHER" id="PTHR31195:SF2">
    <property type="entry name" value="GEO02494P1"/>
    <property type="match status" value="1"/>
</dbReference>
<dbReference type="Pfam" id="PF15377">
    <property type="entry name" value="DUF4604"/>
    <property type="match status" value="1"/>
</dbReference>